<name>SDRA_ARATH</name>
<dbReference type="EC" id="1.1.-.-" evidence="8"/>
<dbReference type="EMBL" id="AF147263">
    <property type="protein sequence ID" value="AAD48959.1"/>
    <property type="molecule type" value="Genomic_DNA"/>
</dbReference>
<dbReference type="EMBL" id="AL161503">
    <property type="protein sequence ID" value="CAB81095.1"/>
    <property type="molecule type" value="Genomic_DNA"/>
</dbReference>
<dbReference type="EMBL" id="CP002687">
    <property type="protein sequence ID" value="AEE82532.1"/>
    <property type="molecule type" value="Genomic_DNA"/>
</dbReference>
<dbReference type="EMBL" id="AY035106">
    <property type="protein sequence ID" value="AAK59611.1"/>
    <property type="molecule type" value="mRNA"/>
</dbReference>
<dbReference type="EMBL" id="AY113900">
    <property type="protein sequence ID" value="AAM44948.1"/>
    <property type="molecule type" value="mRNA"/>
</dbReference>
<dbReference type="EMBL" id="AY087807">
    <property type="protein sequence ID" value="AAM65343.1"/>
    <property type="molecule type" value="mRNA"/>
</dbReference>
<dbReference type="PIR" id="E85069">
    <property type="entry name" value="E85069"/>
</dbReference>
<dbReference type="RefSeq" id="NP_567300.1">
    <property type="nucleotide sequence ID" value="NM_116791.3"/>
</dbReference>
<dbReference type="SMR" id="Q9S9W2"/>
<dbReference type="FunCoup" id="Q9S9W2">
    <property type="interactions" value="2098"/>
</dbReference>
<dbReference type="STRING" id="3702.Q9S9W2"/>
<dbReference type="PaxDb" id="3702-AT4G05530.1"/>
<dbReference type="ProMEX" id="Q9S9W2"/>
<dbReference type="ProteomicsDB" id="234499"/>
<dbReference type="EnsemblPlants" id="AT4G05530.1">
    <property type="protein sequence ID" value="AT4G05530.1"/>
    <property type="gene ID" value="AT4G05530"/>
</dbReference>
<dbReference type="GeneID" id="825905"/>
<dbReference type="Gramene" id="AT4G05530.1">
    <property type="protein sequence ID" value="AT4G05530.1"/>
    <property type="gene ID" value="AT4G05530"/>
</dbReference>
<dbReference type="KEGG" id="ath:AT4G05530"/>
<dbReference type="Araport" id="AT4G05530"/>
<dbReference type="TAIR" id="AT4G05530">
    <property type="gene designation" value="IBR1"/>
</dbReference>
<dbReference type="eggNOG" id="KOG0725">
    <property type="taxonomic scope" value="Eukaryota"/>
</dbReference>
<dbReference type="HOGENOM" id="CLU_010194_1_1_1"/>
<dbReference type="InParanoid" id="Q9S9W2"/>
<dbReference type="OMA" id="WEVANVI"/>
<dbReference type="PhylomeDB" id="Q9S9W2"/>
<dbReference type="BioCyc" id="ARA:AT4G05530-MONOMER"/>
<dbReference type="CD-CODE" id="4299E36E">
    <property type="entry name" value="Nucleolus"/>
</dbReference>
<dbReference type="PRO" id="PR:Q9S9W2"/>
<dbReference type="Proteomes" id="UP000006548">
    <property type="component" value="Chromosome 4"/>
</dbReference>
<dbReference type="ExpressionAtlas" id="Q9S9W2">
    <property type="expression patterns" value="baseline and differential"/>
</dbReference>
<dbReference type="GO" id="GO:0005829">
    <property type="term" value="C:cytosol"/>
    <property type="evidence" value="ECO:0007005"/>
    <property type="project" value="TAIR"/>
</dbReference>
<dbReference type="GO" id="GO:0005777">
    <property type="term" value="C:peroxisome"/>
    <property type="evidence" value="ECO:0000314"/>
    <property type="project" value="TAIR"/>
</dbReference>
<dbReference type="GO" id="GO:0016491">
    <property type="term" value="F:oxidoreductase activity"/>
    <property type="evidence" value="ECO:0007669"/>
    <property type="project" value="UniProtKB-KW"/>
</dbReference>
<dbReference type="GO" id="GO:0006631">
    <property type="term" value="P:fatty acid metabolic process"/>
    <property type="evidence" value="ECO:0007669"/>
    <property type="project" value="UniProtKB-KW"/>
</dbReference>
<dbReference type="GO" id="GO:0080024">
    <property type="term" value="P:indolebutyric acid metabolic process"/>
    <property type="evidence" value="ECO:0000315"/>
    <property type="project" value="TAIR"/>
</dbReference>
<dbReference type="GO" id="GO:0080026">
    <property type="term" value="P:response to indolebutyric acid"/>
    <property type="evidence" value="ECO:0000315"/>
    <property type="project" value="TAIR"/>
</dbReference>
<dbReference type="GO" id="GO:0048767">
    <property type="term" value="P:root hair elongation"/>
    <property type="evidence" value="ECO:0000315"/>
    <property type="project" value="TAIR"/>
</dbReference>
<dbReference type="FunFam" id="3.40.50.720:FF:000084">
    <property type="entry name" value="Short-chain dehydrogenase reductase"/>
    <property type="match status" value="1"/>
</dbReference>
<dbReference type="Gene3D" id="3.40.50.720">
    <property type="entry name" value="NAD(P)-binding Rossmann-like Domain"/>
    <property type="match status" value="1"/>
</dbReference>
<dbReference type="InterPro" id="IPR036291">
    <property type="entry name" value="NAD(P)-bd_dom_sf"/>
</dbReference>
<dbReference type="InterPro" id="IPR020904">
    <property type="entry name" value="Sc_DH/Rdtase_CS"/>
</dbReference>
<dbReference type="InterPro" id="IPR002347">
    <property type="entry name" value="SDR_fam"/>
</dbReference>
<dbReference type="NCBIfam" id="NF005559">
    <property type="entry name" value="PRK07231.1"/>
    <property type="match status" value="1"/>
</dbReference>
<dbReference type="PANTHER" id="PTHR43943">
    <property type="entry name" value="DEHYDROGENASE/REDUCTASE (SDR FAMILY) MEMBER 4"/>
    <property type="match status" value="1"/>
</dbReference>
<dbReference type="PANTHER" id="PTHR43943:SF2">
    <property type="entry name" value="DEHYDROGENASE_REDUCTASE 4"/>
    <property type="match status" value="1"/>
</dbReference>
<dbReference type="Pfam" id="PF13561">
    <property type="entry name" value="adh_short_C2"/>
    <property type="match status" value="1"/>
</dbReference>
<dbReference type="PRINTS" id="PR00081">
    <property type="entry name" value="GDHRDH"/>
</dbReference>
<dbReference type="PRINTS" id="PR00080">
    <property type="entry name" value="SDRFAMILY"/>
</dbReference>
<dbReference type="SUPFAM" id="SSF51735">
    <property type="entry name" value="NAD(P)-binding Rossmann-fold domains"/>
    <property type="match status" value="1"/>
</dbReference>
<dbReference type="PROSITE" id="PS00061">
    <property type="entry name" value="ADH_SHORT"/>
    <property type="match status" value="1"/>
</dbReference>
<protein>
    <recommendedName>
        <fullName evidence="8">Short-chain dehydrogenase/reductase SDRA</fullName>
        <ecNumber evidence="8">1.1.-.-</ecNumber>
    </recommendedName>
    <alternativeName>
        <fullName evidence="6">Protein INDOLE-3-BUTYRIC ACID RESPONSE 1</fullName>
    </alternativeName>
    <alternativeName>
        <fullName evidence="8">Short-chain dehydrogenase/reductase A</fullName>
    </alternativeName>
</protein>
<comment type="function">
    <text evidence="4 5">Involved with IBR3 and IBR10 in the peroxisomal beta-oxidation of indole-3-butyric acid (IBA) to form indole-3-acetic acid (IAA), a biologically active auxin. May be responsible for catalyzing the dehydrogenation step in the conversion of IBA (PubMed:20562230). May be involved in the peroxisomal activation of 2,4-dichlorophenoxybutyric acid (2,4-DB), a precursor of active auxins that inhibit root growth (PubMed:19043666).</text>
</comment>
<comment type="subcellular location">
    <subcellularLocation>
        <location evidence="4 9">Peroxisome</location>
    </subcellularLocation>
</comment>
<comment type="disruption phenotype">
    <text evidence="3 4 5">Defective in root hair expansion (PubMed:20562230). Mutant plants are resistant to the inhibitory effect of intermediate levels of indole-3-butyric acid (IBA) and 2,4-DB on root elongation (PubMed:18725356, PubMed:19043666).</text>
</comment>
<comment type="similarity">
    <text evidence="8">Belongs to the short-chain dehydrogenases/reductases (SDR) family.</text>
</comment>
<organism>
    <name type="scientific">Arabidopsis thaliana</name>
    <name type="common">Mouse-ear cress</name>
    <dbReference type="NCBI Taxonomy" id="3702"/>
    <lineage>
        <taxon>Eukaryota</taxon>
        <taxon>Viridiplantae</taxon>
        <taxon>Streptophyta</taxon>
        <taxon>Embryophyta</taxon>
        <taxon>Tracheophyta</taxon>
        <taxon>Spermatophyta</taxon>
        <taxon>Magnoliopsida</taxon>
        <taxon>eudicotyledons</taxon>
        <taxon>Gunneridae</taxon>
        <taxon>Pentapetalae</taxon>
        <taxon>rosids</taxon>
        <taxon>malvids</taxon>
        <taxon>Brassicales</taxon>
        <taxon>Brassicaceae</taxon>
        <taxon>Camelineae</taxon>
        <taxon>Arabidopsis</taxon>
    </lineage>
</organism>
<accession>Q9S9W2</accession>
<evidence type="ECO:0000250" key="1">
    <source>
        <dbReference type="UniProtKB" id="P50162"/>
    </source>
</evidence>
<evidence type="ECO:0000255" key="2">
    <source>
        <dbReference type="PROSITE-ProRule" id="PRU10001"/>
    </source>
</evidence>
<evidence type="ECO:0000269" key="3">
    <source>
    </source>
</evidence>
<evidence type="ECO:0000269" key="4">
    <source>
    </source>
</evidence>
<evidence type="ECO:0000269" key="5">
    <source>
    </source>
</evidence>
<evidence type="ECO:0000303" key="6">
    <source>
    </source>
</evidence>
<evidence type="ECO:0000303" key="7">
    <source>
    </source>
</evidence>
<evidence type="ECO:0000305" key="8"/>
<evidence type="ECO:0000305" key="9">
    <source>
    </source>
</evidence>
<evidence type="ECO:0000312" key="10">
    <source>
        <dbReference type="Araport" id="AT4G05530"/>
    </source>
</evidence>
<evidence type="ECO:0000312" key="11">
    <source>
        <dbReference type="EMBL" id="AAD48959.1"/>
    </source>
</evidence>
<reference key="1">
    <citation type="journal article" date="1999" name="Nature">
        <title>Sequence and analysis of chromosome 4 of the plant Arabidopsis thaliana.</title>
        <authorList>
            <person name="Mayer K.F.X."/>
            <person name="Schueller C."/>
            <person name="Wambutt R."/>
            <person name="Murphy G."/>
            <person name="Volckaert G."/>
            <person name="Pohl T."/>
            <person name="Duesterhoeft A."/>
            <person name="Stiekema W."/>
            <person name="Entian K.-D."/>
            <person name="Terryn N."/>
            <person name="Harris B."/>
            <person name="Ansorge W."/>
            <person name="Brandt P."/>
            <person name="Grivell L.A."/>
            <person name="Rieger M."/>
            <person name="Weichselgartner M."/>
            <person name="de Simone V."/>
            <person name="Obermaier B."/>
            <person name="Mache R."/>
            <person name="Mueller M."/>
            <person name="Kreis M."/>
            <person name="Delseny M."/>
            <person name="Puigdomenech P."/>
            <person name="Watson M."/>
            <person name="Schmidtheini T."/>
            <person name="Reichert B."/>
            <person name="Portetelle D."/>
            <person name="Perez-Alonso M."/>
            <person name="Boutry M."/>
            <person name="Bancroft I."/>
            <person name="Vos P."/>
            <person name="Hoheisel J."/>
            <person name="Zimmermann W."/>
            <person name="Wedler H."/>
            <person name="Ridley P."/>
            <person name="Langham S.-A."/>
            <person name="McCullagh B."/>
            <person name="Bilham L."/>
            <person name="Robben J."/>
            <person name="van der Schueren J."/>
            <person name="Grymonprez B."/>
            <person name="Chuang Y.-J."/>
            <person name="Vandenbussche F."/>
            <person name="Braeken M."/>
            <person name="Weltjens I."/>
            <person name="Voet M."/>
            <person name="Bastiaens I."/>
            <person name="Aert R."/>
            <person name="Defoor E."/>
            <person name="Weitzenegger T."/>
            <person name="Bothe G."/>
            <person name="Ramsperger U."/>
            <person name="Hilbert H."/>
            <person name="Braun M."/>
            <person name="Holzer E."/>
            <person name="Brandt A."/>
            <person name="Peters S."/>
            <person name="van Staveren M."/>
            <person name="Dirkse W."/>
            <person name="Mooijman P."/>
            <person name="Klein Lankhorst R."/>
            <person name="Rose M."/>
            <person name="Hauf J."/>
            <person name="Koetter P."/>
            <person name="Berneiser S."/>
            <person name="Hempel S."/>
            <person name="Feldpausch M."/>
            <person name="Lamberth S."/>
            <person name="Van den Daele H."/>
            <person name="De Keyser A."/>
            <person name="Buysshaert C."/>
            <person name="Gielen J."/>
            <person name="Villarroel R."/>
            <person name="De Clercq R."/>
            <person name="van Montagu M."/>
            <person name="Rogers J."/>
            <person name="Cronin A."/>
            <person name="Quail M.A."/>
            <person name="Bray-Allen S."/>
            <person name="Clark L."/>
            <person name="Doggett J."/>
            <person name="Hall S."/>
            <person name="Kay M."/>
            <person name="Lennard N."/>
            <person name="McLay K."/>
            <person name="Mayes R."/>
            <person name="Pettett A."/>
            <person name="Rajandream M.A."/>
            <person name="Lyne M."/>
            <person name="Benes V."/>
            <person name="Rechmann S."/>
            <person name="Borkova D."/>
            <person name="Bloecker H."/>
            <person name="Scharfe M."/>
            <person name="Grimm M."/>
            <person name="Loehnert T.-H."/>
            <person name="Dose S."/>
            <person name="de Haan M."/>
            <person name="Maarse A.C."/>
            <person name="Schaefer M."/>
            <person name="Mueller-Auer S."/>
            <person name="Gabel C."/>
            <person name="Fuchs M."/>
            <person name="Fartmann B."/>
            <person name="Granderath K."/>
            <person name="Dauner D."/>
            <person name="Herzl A."/>
            <person name="Neumann S."/>
            <person name="Argiriou A."/>
            <person name="Vitale D."/>
            <person name="Liguori R."/>
            <person name="Piravandi E."/>
            <person name="Massenet O."/>
            <person name="Quigley F."/>
            <person name="Clabauld G."/>
            <person name="Muendlein A."/>
            <person name="Felber R."/>
            <person name="Schnabl S."/>
            <person name="Hiller R."/>
            <person name="Schmidt W."/>
            <person name="Lecharny A."/>
            <person name="Aubourg S."/>
            <person name="Chefdor F."/>
            <person name="Cooke R."/>
            <person name="Berger C."/>
            <person name="Monfort A."/>
            <person name="Casacuberta E."/>
            <person name="Gibbons T."/>
            <person name="Weber N."/>
            <person name="Vandenbol M."/>
            <person name="Bargues M."/>
            <person name="Terol J."/>
            <person name="Torres A."/>
            <person name="Perez-Perez A."/>
            <person name="Purnelle B."/>
            <person name="Bent E."/>
            <person name="Johnson S."/>
            <person name="Tacon D."/>
            <person name="Jesse T."/>
            <person name="Heijnen L."/>
            <person name="Schwarz S."/>
            <person name="Scholler P."/>
            <person name="Heber S."/>
            <person name="Francs P."/>
            <person name="Bielke C."/>
            <person name="Frishman D."/>
            <person name="Haase D."/>
            <person name="Lemcke K."/>
            <person name="Mewes H.-W."/>
            <person name="Stocker S."/>
            <person name="Zaccaria P."/>
            <person name="Bevan M."/>
            <person name="Wilson R.K."/>
            <person name="de la Bastide M."/>
            <person name="Habermann K."/>
            <person name="Parnell L."/>
            <person name="Dedhia N."/>
            <person name="Gnoj L."/>
            <person name="Schutz K."/>
            <person name="Huang E."/>
            <person name="Spiegel L."/>
            <person name="Sekhon M."/>
            <person name="Murray J."/>
            <person name="Sheet P."/>
            <person name="Cordes M."/>
            <person name="Abu-Threideh J."/>
            <person name="Stoneking T."/>
            <person name="Kalicki J."/>
            <person name="Graves T."/>
            <person name="Harmon G."/>
            <person name="Edwards J."/>
            <person name="Latreille P."/>
            <person name="Courtney L."/>
            <person name="Cloud J."/>
            <person name="Abbott A."/>
            <person name="Scott K."/>
            <person name="Johnson D."/>
            <person name="Minx P."/>
            <person name="Bentley D."/>
            <person name="Fulton B."/>
            <person name="Miller N."/>
            <person name="Greco T."/>
            <person name="Kemp K."/>
            <person name="Kramer J."/>
            <person name="Fulton L."/>
            <person name="Mardis E."/>
            <person name="Dante M."/>
            <person name="Pepin K."/>
            <person name="Hillier L.W."/>
            <person name="Nelson J."/>
            <person name="Spieth J."/>
            <person name="Ryan E."/>
            <person name="Andrews S."/>
            <person name="Geisel C."/>
            <person name="Layman D."/>
            <person name="Du H."/>
            <person name="Ali J."/>
            <person name="Berghoff A."/>
            <person name="Jones K."/>
            <person name="Drone K."/>
            <person name="Cotton M."/>
            <person name="Joshu C."/>
            <person name="Antonoiu B."/>
            <person name="Zidanic M."/>
            <person name="Strong C."/>
            <person name="Sun H."/>
            <person name="Lamar B."/>
            <person name="Yordan C."/>
            <person name="Ma P."/>
            <person name="Zhong J."/>
            <person name="Preston R."/>
            <person name="Vil D."/>
            <person name="Shekher M."/>
            <person name="Matero A."/>
            <person name="Shah R."/>
            <person name="Swaby I.K."/>
            <person name="O'Shaughnessy A."/>
            <person name="Rodriguez M."/>
            <person name="Hoffman J."/>
            <person name="Till S."/>
            <person name="Granat S."/>
            <person name="Shohdy N."/>
            <person name="Hasegawa A."/>
            <person name="Hameed A."/>
            <person name="Lodhi M."/>
            <person name="Johnson A."/>
            <person name="Chen E."/>
            <person name="Marra M.A."/>
            <person name="Martienssen R."/>
            <person name="McCombie W.R."/>
        </authorList>
    </citation>
    <scope>NUCLEOTIDE SEQUENCE [LARGE SCALE GENOMIC DNA]</scope>
    <source>
        <strain>cv. Columbia</strain>
    </source>
</reference>
<reference key="2">
    <citation type="journal article" date="2017" name="Plant J.">
        <title>Araport11: a complete reannotation of the Arabidopsis thaliana reference genome.</title>
        <authorList>
            <person name="Cheng C.Y."/>
            <person name="Krishnakumar V."/>
            <person name="Chan A.P."/>
            <person name="Thibaud-Nissen F."/>
            <person name="Schobel S."/>
            <person name="Town C.D."/>
        </authorList>
    </citation>
    <scope>GENOME REANNOTATION</scope>
    <source>
        <strain>cv. Columbia</strain>
    </source>
</reference>
<reference key="3">
    <citation type="journal article" date="2003" name="Science">
        <title>Empirical analysis of transcriptional activity in the Arabidopsis genome.</title>
        <authorList>
            <person name="Yamada K."/>
            <person name="Lim J."/>
            <person name="Dale J.M."/>
            <person name="Chen H."/>
            <person name="Shinn P."/>
            <person name="Palm C.J."/>
            <person name="Southwick A.M."/>
            <person name="Wu H.C."/>
            <person name="Kim C.J."/>
            <person name="Nguyen M."/>
            <person name="Pham P.K."/>
            <person name="Cheuk R.F."/>
            <person name="Karlin-Newmann G."/>
            <person name="Liu S.X."/>
            <person name="Lam B."/>
            <person name="Sakano H."/>
            <person name="Wu T."/>
            <person name="Yu G."/>
            <person name="Miranda M."/>
            <person name="Quach H.L."/>
            <person name="Tripp M."/>
            <person name="Chang C.H."/>
            <person name="Lee J.M."/>
            <person name="Toriumi M.J."/>
            <person name="Chan M.M."/>
            <person name="Tang C.C."/>
            <person name="Onodera C.S."/>
            <person name="Deng J.M."/>
            <person name="Akiyama K."/>
            <person name="Ansari Y."/>
            <person name="Arakawa T."/>
            <person name="Banh J."/>
            <person name="Banno F."/>
            <person name="Bowser L."/>
            <person name="Brooks S.Y."/>
            <person name="Carninci P."/>
            <person name="Chao Q."/>
            <person name="Choy N."/>
            <person name="Enju A."/>
            <person name="Goldsmith A.D."/>
            <person name="Gurjal M."/>
            <person name="Hansen N.F."/>
            <person name="Hayashizaki Y."/>
            <person name="Johnson-Hopson C."/>
            <person name="Hsuan V.W."/>
            <person name="Iida K."/>
            <person name="Karnes M."/>
            <person name="Khan S."/>
            <person name="Koesema E."/>
            <person name="Ishida J."/>
            <person name="Jiang P.X."/>
            <person name="Jones T."/>
            <person name="Kawai J."/>
            <person name="Kamiya A."/>
            <person name="Meyers C."/>
            <person name="Nakajima M."/>
            <person name="Narusaka M."/>
            <person name="Seki M."/>
            <person name="Sakurai T."/>
            <person name="Satou M."/>
            <person name="Tamse R."/>
            <person name="Vaysberg M."/>
            <person name="Wallender E.K."/>
            <person name="Wong C."/>
            <person name="Yamamura Y."/>
            <person name="Yuan S."/>
            <person name="Shinozaki K."/>
            <person name="Davis R.W."/>
            <person name="Theologis A."/>
            <person name="Ecker J.R."/>
        </authorList>
    </citation>
    <scope>NUCLEOTIDE SEQUENCE [LARGE SCALE MRNA]</scope>
    <source>
        <strain>cv. Columbia</strain>
    </source>
</reference>
<reference key="4">
    <citation type="journal article" date="2007" name="Plant Cell">
        <title>Proteome analysis of Arabidopsis leaf peroxisomes reveals novel targeting peptides, metabolic pathways, and defense mechanisms.</title>
        <authorList>
            <person name="Reumann S."/>
            <person name="Babujee L."/>
            <person name="Ma C."/>
            <person name="Wienkoop S."/>
            <person name="Siemsen T."/>
            <person name="Antonicelli G.E."/>
            <person name="Rasche N."/>
            <person name="Lueder F."/>
            <person name="Weckwerth W."/>
            <person name="Jahn O."/>
        </authorList>
    </citation>
    <scope>SUBCELLULAR LOCATION</scope>
    <scope>IDENTIFICATION BY MASS SPECTROMETRY</scope>
</reference>
<reference key="5">
    <citation type="journal article" date="2008" name="Genetics">
        <title>Identification and characterization of Arabidopsis indole-3-butyric acid response mutants defective in novel peroxisomal enzymes.</title>
        <authorList>
            <person name="Zolman B.K."/>
            <person name="Martinez N."/>
            <person name="Millius A."/>
            <person name="Adham A.R."/>
            <person name="Bartel B."/>
        </authorList>
    </citation>
    <scope>DISRUPTION PHENOTYPE</scope>
    <scope>MUTAGENESIS OF ARG-43 AND SER-140</scope>
</reference>
<reference key="6">
    <citation type="journal article" date="2009" name="Plant Mol. Biol.">
        <title>Identification of two Arabidopsis genes encoding a peroxisomal oxidoreductase-like protein and an acyl-CoA synthetase-like protein that are required for responses to pro-auxins.</title>
        <authorList>
            <person name="Wiszniewski A.A."/>
            <person name="Zhou W."/>
            <person name="Smith S.M."/>
            <person name="Bussell J.D."/>
        </authorList>
    </citation>
    <scope>FUNCTION</scope>
    <scope>SUBCELLULAR LOCATION</scope>
    <scope>DISRUPTION PHENOTYPE</scope>
</reference>
<reference key="7">
    <citation type="journal article" date="2010" name="Plant Physiol.">
        <title>Conversion of endogenous indole-3-butyric acid to indole-3-acetic acid drives cell expansion in Arabidopsis seedlings.</title>
        <authorList>
            <person name="Strader L.C."/>
            <person name="Culler A.H."/>
            <person name="Cohen J.D."/>
            <person name="Bartel B."/>
        </authorList>
    </citation>
    <scope>FUNCTION</scope>
    <scope>DISRUPTION PHENOTYPE</scope>
</reference>
<keyword id="KW-0276">Fatty acid metabolism</keyword>
<keyword id="KW-0443">Lipid metabolism</keyword>
<keyword id="KW-0560">Oxidoreductase</keyword>
<keyword id="KW-0576">Peroxisome</keyword>
<keyword id="KW-1185">Reference proteome</keyword>
<proteinExistence type="evidence at protein level"/>
<sequence length="254" mass="26765">MEKKLPRRLEGKVAIVTASTQGIGFGITERFGLEGASVVVSSRKQANVDEAVAKLKSKGIDAYGIVCHVSNAQHRRNLVEKTVQKYGKIDIVVCNAAANPSTDPILSSKEAVLDKLWEINVKSSILLLQDMAPHLEKGSSVIFITSIAGFSPQGAMAMYGVTKTALLGLTKALAAEMAPDTRVNAVAPGFVPTHFASFITGSSEVREGIEEKTLLNRLGTTGDMAAAAAFLASDDSSYITGETLVVAGGMPSRL</sequence>
<gene>
    <name evidence="7" type="primary">SDRA</name>
    <name evidence="6" type="synonym">IBR1</name>
    <name evidence="10" type="ordered locus">At4g05530</name>
    <name evidence="11" type="ORF">T1J24.9</name>
</gene>
<feature type="chain" id="PRO_0000432487" description="Short-chain dehydrogenase/reductase SDRA">
    <location>
        <begin position="1"/>
        <end position="254"/>
    </location>
</feature>
<feature type="short sequence motif" description="Microbody targeting signal" evidence="8">
    <location>
        <begin position="252"/>
        <end position="254"/>
    </location>
</feature>
<feature type="active site" description="Proton acceptor" evidence="1 2">
    <location>
        <position position="159"/>
    </location>
</feature>
<feature type="binding site" evidence="1">
    <location>
        <begin position="15"/>
        <end position="39"/>
    </location>
    <ligand>
        <name>NADP(+)</name>
        <dbReference type="ChEBI" id="CHEBI:58349"/>
    </ligand>
</feature>
<feature type="binding site" evidence="1">
    <location>
        <position position="146"/>
    </location>
    <ligand>
        <name>substrate</name>
    </ligand>
</feature>
<feature type="mutagenesis site" description="In ibr1-1; resistance to the inhibitory effect of intermediate levels of indole-3-butyric acid (IBA) on root elongation." evidence="3">
    <original>R</original>
    <variation>C</variation>
    <location>
        <position position="43"/>
    </location>
</feature>
<feature type="mutagenesis site" description="In ibr1-8; resistance to the inhibitory effect of intermediate levels of indole-3-butyric acid (IBA) on root elongation." evidence="3">
    <original>S</original>
    <variation>F</variation>
    <location>
        <position position="140"/>
    </location>
</feature>